<comment type="function">
    <text evidence="1">Specifically methylates the N4 position of cytidine in position 1402 (C1402) of 16S rRNA.</text>
</comment>
<comment type="catalytic activity">
    <reaction evidence="1">
        <text>cytidine(1402) in 16S rRNA + S-adenosyl-L-methionine = N(4)-methylcytidine(1402) in 16S rRNA + S-adenosyl-L-homocysteine + H(+)</text>
        <dbReference type="Rhea" id="RHEA:42928"/>
        <dbReference type="Rhea" id="RHEA-COMP:10286"/>
        <dbReference type="Rhea" id="RHEA-COMP:10287"/>
        <dbReference type="ChEBI" id="CHEBI:15378"/>
        <dbReference type="ChEBI" id="CHEBI:57856"/>
        <dbReference type="ChEBI" id="CHEBI:59789"/>
        <dbReference type="ChEBI" id="CHEBI:74506"/>
        <dbReference type="ChEBI" id="CHEBI:82748"/>
        <dbReference type="EC" id="2.1.1.199"/>
    </reaction>
</comment>
<comment type="subcellular location">
    <subcellularLocation>
        <location evidence="1">Cytoplasm</location>
    </subcellularLocation>
</comment>
<comment type="similarity">
    <text evidence="1">Belongs to the methyltransferase superfamily. RsmH family.</text>
</comment>
<sequence length="313" mass="34793">MTENYKHTSVLLDEAVNGLNIRPDGIYIDGTFGRGGHSRLILSQLGAEGRLLAIDRDPQAIAVAKTIDDPRFSFVHGPFSALADYVSERDLTGKIDGILLDLGVSSPQLDDAERGFSFMRDGPLDMRMDPTRGQSAAEWLLTAEEADIAWVIKTFGEERFGKRIARGIVERNRIEPMTRTKELAEVVTAATPVKDKFKHPATRTFQAVRIWVNSELEEIELALKSSLGVLAPGGRLSIISFHSLEDRIVKRFMREQSRGPQVPAGLPMTEDQLRKLGGRYLRVLGKMMPGEEEVAENPRARSSVLRIAERTNA</sequence>
<accession>A4W6I5</accession>
<dbReference type="EC" id="2.1.1.199" evidence="1"/>
<dbReference type="EMBL" id="CP000653">
    <property type="protein sequence ID" value="ABP59315.1"/>
    <property type="molecule type" value="Genomic_DNA"/>
</dbReference>
<dbReference type="RefSeq" id="WP_012016037.1">
    <property type="nucleotide sequence ID" value="NC_009436.1"/>
</dbReference>
<dbReference type="SMR" id="A4W6I5"/>
<dbReference type="STRING" id="399742.Ent638_0628"/>
<dbReference type="KEGG" id="ent:Ent638_0628"/>
<dbReference type="eggNOG" id="COG0275">
    <property type="taxonomic scope" value="Bacteria"/>
</dbReference>
<dbReference type="HOGENOM" id="CLU_038422_2_0_6"/>
<dbReference type="OrthoDB" id="9806637at2"/>
<dbReference type="Proteomes" id="UP000000230">
    <property type="component" value="Chromosome"/>
</dbReference>
<dbReference type="GO" id="GO:0005737">
    <property type="term" value="C:cytoplasm"/>
    <property type="evidence" value="ECO:0007669"/>
    <property type="project" value="UniProtKB-SubCell"/>
</dbReference>
<dbReference type="GO" id="GO:0071424">
    <property type="term" value="F:rRNA (cytosine-N4-)-methyltransferase activity"/>
    <property type="evidence" value="ECO:0007669"/>
    <property type="project" value="UniProtKB-UniRule"/>
</dbReference>
<dbReference type="GO" id="GO:0070475">
    <property type="term" value="P:rRNA base methylation"/>
    <property type="evidence" value="ECO:0007669"/>
    <property type="project" value="UniProtKB-UniRule"/>
</dbReference>
<dbReference type="FunFam" id="1.10.150.170:FF:000001">
    <property type="entry name" value="Ribosomal RNA small subunit methyltransferase H"/>
    <property type="match status" value="1"/>
</dbReference>
<dbReference type="Gene3D" id="1.10.150.170">
    <property type="entry name" value="Putative methyltransferase TM0872, insert domain"/>
    <property type="match status" value="1"/>
</dbReference>
<dbReference type="Gene3D" id="3.40.50.150">
    <property type="entry name" value="Vaccinia Virus protein VP39"/>
    <property type="match status" value="1"/>
</dbReference>
<dbReference type="HAMAP" id="MF_01007">
    <property type="entry name" value="16SrRNA_methyltr_H"/>
    <property type="match status" value="1"/>
</dbReference>
<dbReference type="InterPro" id="IPR002903">
    <property type="entry name" value="RsmH"/>
</dbReference>
<dbReference type="InterPro" id="IPR023397">
    <property type="entry name" value="SAM-dep_MeTrfase_MraW_recog"/>
</dbReference>
<dbReference type="InterPro" id="IPR029063">
    <property type="entry name" value="SAM-dependent_MTases_sf"/>
</dbReference>
<dbReference type="NCBIfam" id="TIGR00006">
    <property type="entry name" value="16S rRNA (cytosine(1402)-N(4))-methyltransferase RsmH"/>
    <property type="match status" value="1"/>
</dbReference>
<dbReference type="PANTHER" id="PTHR11265:SF0">
    <property type="entry name" value="12S RRNA N4-METHYLCYTIDINE METHYLTRANSFERASE"/>
    <property type="match status" value="1"/>
</dbReference>
<dbReference type="PANTHER" id="PTHR11265">
    <property type="entry name" value="S-ADENOSYL-METHYLTRANSFERASE MRAW"/>
    <property type="match status" value="1"/>
</dbReference>
<dbReference type="Pfam" id="PF01795">
    <property type="entry name" value="Methyltransf_5"/>
    <property type="match status" value="1"/>
</dbReference>
<dbReference type="PIRSF" id="PIRSF004486">
    <property type="entry name" value="MraW"/>
    <property type="match status" value="1"/>
</dbReference>
<dbReference type="SUPFAM" id="SSF81799">
    <property type="entry name" value="Putative methyltransferase TM0872, insert domain"/>
    <property type="match status" value="1"/>
</dbReference>
<dbReference type="SUPFAM" id="SSF53335">
    <property type="entry name" value="S-adenosyl-L-methionine-dependent methyltransferases"/>
    <property type="match status" value="1"/>
</dbReference>
<keyword id="KW-0963">Cytoplasm</keyword>
<keyword id="KW-0489">Methyltransferase</keyword>
<keyword id="KW-0698">rRNA processing</keyword>
<keyword id="KW-0949">S-adenosyl-L-methionine</keyword>
<keyword id="KW-0808">Transferase</keyword>
<evidence type="ECO:0000255" key="1">
    <source>
        <dbReference type="HAMAP-Rule" id="MF_01007"/>
    </source>
</evidence>
<feature type="chain" id="PRO_0000386865" description="Ribosomal RNA small subunit methyltransferase H">
    <location>
        <begin position="1"/>
        <end position="313"/>
    </location>
</feature>
<feature type="binding site" evidence="1">
    <location>
        <begin position="35"/>
        <end position="37"/>
    </location>
    <ligand>
        <name>S-adenosyl-L-methionine</name>
        <dbReference type="ChEBI" id="CHEBI:59789"/>
    </ligand>
</feature>
<feature type="binding site" evidence="1">
    <location>
        <position position="55"/>
    </location>
    <ligand>
        <name>S-adenosyl-L-methionine</name>
        <dbReference type="ChEBI" id="CHEBI:59789"/>
    </ligand>
</feature>
<feature type="binding site" evidence="1">
    <location>
        <position position="79"/>
    </location>
    <ligand>
        <name>S-adenosyl-L-methionine</name>
        <dbReference type="ChEBI" id="CHEBI:59789"/>
    </ligand>
</feature>
<feature type="binding site" evidence="1">
    <location>
        <position position="101"/>
    </location>
    <ligand>
        <name>S-adenosyl-L-methionine</name>
        <dbReference type="ChEBI" id="CHEBI:59789"/>
    </ligand>
</feature>
<feature type="binding site" evidence="1">
    <location>
        <position position="108"/>
    </location>
    <ligand>
        <name>S-adenosyl-L-methionine</name>
        <dbReference type="ChEBI" id="CHEBI:59789"/>
    </ligand>
</feature>
<protein>
    <recommendedName>
        <fullName evidence="1">Ribosomal RNA small subunit methyltransferase H</fullName>
        <ecNumber evidence="1">2.1.1.199</ecNumber>
    </recommendedName>
    <alternativeName>
        <fullName evidence="1">16S rRNA m(4)C1402 methyltransferase</fullName>
    </alternativeName>
    <alternativeName>
        <fullName evidence="1">rRNA (cytosine-N(4)-)-methyltransferase RsmH</fullName>
    </alternativeName>
</protein>
<reference key="1">
    <citation type="journal article" date="2010" name="PLoS Genet.">
        <title>Genome sequence of the plant growth promoting endophytic bacterium Enterobacter sp. 638.</title>
        <authorList>
            <person name="Taghavi S."/>
            <person name="van der Lelie D."/>
            <person name="Hoffman A."/>
            <person name="Zhang Y.B."/>
            <person name="Walla M.D."/>
            <person name="Vangronsveld J."/>
            <person name="Newman L."/>
            <person name="Monchy S."/>
        </authorList>
    </citation>
    <scope>NUCLEOTIDE SEQUENCE [LARGE SCALE GENOMIC DNA]</scope>
    <source>
        <strain>638</strain>
    </source>
</reference>
<name>RSMH_ENT38</name>
<proteinExistence type="inferred from homology"/>
<organism>
    <name type="scientific">Enterobacter sp. (strain 638)</name>
    <dbReference type="NCBI Taxonomy" id="399742"/>
    <lineage>
        <taxon>Bacteria</taxon>
        <taxon>Pseudomonadati</taxon>
        <taxon>Pseudomonadota</taxon>
        <taxon>Gammaproteobacteria</taxon>
        <taxon>Enterobacterales</taxon>
        <taxon>Enterobacteriaceae</taxon>
        <taxon>Enterobacter</taxon>
    </lineage>
</organism>
<gene>
    <name evidence="1" type="primary">rsmH</name>
    <name type="synonym">mraW</name>
    <name type="ordered locus">Ent638_0628</name>
</gene>